<proteinExistence type="inferred from homology"/>
<protein>
    <recommendedName>
        <fullName>Prephenate dehydratase</fullName>
        <shortName>PDT</shortName>
        <ecNumber>4.2.1.51</ecNumber>
    </recommendedName>
</protein>
<comment type="catalytic activity">
    <reaction>
        <text>prephenate + H(+) = 3-phenylpyruvate + CO2 + H2O</text>
        <dbReference type="Rhea" id="RHEA:21648"/>
        <dbReference type="ChEBI" id="CHEBI:15377"/>
        <dbReference type="ChEBI" id="CHEBI:15378"/>
        <dbReference type="ChEBI" id="CHEBI:16526"/>
        <dbReference type="ChEBI" id="CHEBI:18005"/>
        <dbReference type="ChEBI" id="CHEBI:29934"/>
        <dbReference type="EC" id="4.2.1.51"/>
    </reaction>
</comment>
<comment type="pathway">
    <text>Amino-acid biosynthesis; L-phenylalanine biosynthesis; phenylpyruvate from prephenate: step 1/1.</text>
</comment>
<comment type="subunit">
    <text evidence="1">Homodimer.</text>
</comment>
<dbReference type="EC" id="4.2.1.51"/>
<dbReference type="EMBL" id="CP000325">
    <property type="protein sequence ID" value="ABL06886.1"/>
    <property type="molecule type" value="Genomic_DNA"/>
</dbReference>
<dbReference type="RefSeq" id="WP_011742477.1">
    <property type="nucleotide sequence ID" value="NC_008611.1"/>
</dbReference>
<dbReference type="SMR" id="A0PX17"/>
<dbReference type="KEGG" id="mul:MUL_5011"/>
<dbReference type="eggNOG" id="COG0077">
    <property type="taxonomic scope" value="Bacteria"/>
</dbReference>
<dbReference type="HOGENOM" id="CLU_035008_0_0_11"/>
<dbReference type="UniPathway" id="UPA00121">
    <property type="reaction ID" value="UER00345"/>
</dbReference>
<dbReference type="Proteomes" id="UP000000765">
    <property type="component" value="Chromosome"/>
</dbReference>
<dbReference type="GO" id="GO:0005737">
    <property type="term" value="C:cytoplasm"/>
    <property type="evidence" value="ECO:0007669"/>
    <property type="project" value="TreeGrafter"/>
</dbReference>
<dbReference type="GO" id="GO:0004664">
    <property type="term" value="F:prephenate dehydratase activity"/>
    <property type="evidence" value="ECO:0007669"/>
    <property type="project" value="UniProtKB-EC"/>
</dbReference>
<dbReference type="GO" id="GO:0042803">
    <property type="term" value="F:protein homodimerization activity"/>
    <property type="evidence" value="ECO:0000250"/>
    <property type="project" value="UniProtKB"/>
</dbReference>
<dbReference type="GO" id="GO:0009094">
    <property type="term" value="P:L-phenylalanine biosynthetic process"/>
    <property type="evidence" value="ECO:0007669"/>
    <property type="project" value="UniProtKB-UniPathway"/>
</dbReference>
<dbReference type="CDD" id="cd04905">
    <property type="entry name" value="ACT_CM-PDT"/>
    <property type="match status" value="1"/>
</dbReference>
<dbReference type="CDD" id="cd13632">
    <property type="entry name" value="PBP2_Aa-PDT_like"/>
    <property type="match status" value="1"/>
</dbReference>
<dbReference type="FunFam" id="3.30.70.260:FF:000012">
    <property type="entry name" value="Prephenate dehydratase"/>
    <property type="match status" value="1"/>
</dbReference>
<dbReference type="FunFam" id="3.40.190.10:FF:000064">
    <property type="entry name" value="Prephenate dehydratase"/>
    <property type="match status" value="1"/>
</dbReference>
<dbReference type="FunFam" id="3.40.190.10:FF:000146">
    <property type="entry name" value="Prephenate dehydratase"/>
    <property type="match status" value="1"/>
</dbReference>
<dbReference type="Gene3D" id="3.30.70.260">
    <property type="match status" value="1"/>
</dbReference>
<dbReference type="Gene3D" id="3.40.190.10">
    <property type="entry name" value="Periplasmic binding protein-like II"/>
    <property type="match status" value="2"/>
</dbReference>
<dbReference type="InterPro" id="IPR045865">
    <property type="entry name" value="ACT-like_dom_sf"/>
</dbReference>
<dbReference type="InterPro" id="IPR002912">
    <property type="entry name" value="ACT_dom"/>
</dbReference>
<dbReference type="InterPro" id="IPR008242">
    <property type="entry name" value="Chor_mutase/pphenate_deHydtase"/>
</dbReference>
<dbReference type="InterPro" id="IPR001086">
    <property type="entry name" value="Preph_deHydtase"/>
</dbReference>
<dbReference type="InterPro" id="IPR018528">
    <property type="entry name" value="Preph_deHydtase_CS"/>
</dbReference>
<dbReference type="NCBIfam" id="NF008865">
    <property type="entry name" value="PRK11898.1"/>
    <property type="match status" value="1"/>
</dbReference>
<dbReference type="PANTHER" id="PTHR21022">
    <property type="entry name" value="PREPHENATE DEHYDRATASE P PROTEIN"/>
    <property type="match status" value="1"/>
</dbReference>
<dbReference type="PANTHER" id="PTHR21022:SF19">
    <property type="entry name" value="PREPHENATE DEHYDRATASE-RELATED"/>
    <property type="match status" value="1"/>
</dbReference>
<dbReference type="Pfam" id="PF01842">
    <property type="entry name" value="ACT"/>
    <property type="match status" value="1"/>
</dbReference>
<dbReference type="Pfam" id="PF00800">
    <property type="entry name" value="PDT"/>
    <property type="match status" value="1"/>
</dbReference>
<dbReference type="PIRSF" id="PIRSF001500">
    <property type="entry name" value="Chor_mut_pdt_Ppr"/>
    <property type="match status" value="1"/>
</dbReference>
<dbReference type="SUPFAM" id="SSF55021">
    <property type="entry name" value="ACT-like"/>
    <property type="match status" value="1"/>
</dbReference>
<dbReference type="SUPFAM" id="SSF53850">
    <property type="entry name" value="Periplasmic binding protein-like II"/>
    <property type="match status" value="1"/>
</dbReference>
<dbReference type="PROSITE" id="PS51671">
    <property type="entry name" value="ACT"/>
    <property type="match status" value="1"/>
</dbReference>
<dbReference type="PROSITE" id="PS00858">
    <property type="entry name" value="PREPHENATE_DEHYDR_2"/>
    <property type="match status" value="1"/>
</dbReference>
<dbReference type="PROSITE" id="PS51171">
    <property type="entry name" value="PREPHENATE_DEHYDR_3"/>
    <property type="match status" value="1"/>
</dbReference>
<gene>
    <name type="primary">pheA</name>
    <name type="ordered locus">MUL_5011</name>
</gene>
<sequence>MARIAYLGPEGTFTQAALLEIAAAGLVPGHDDGGAQPLPVDSTPAALDAVRTGAAEFACVPIENSIDGSLAPTLDSLAIGSPLQVFAETTLDVAFSIVVKPGVGAADVRTLAAFPVAAAQVRQWLTAHLPNVELHPAYSNADGARQVAEGQVDAAVTSPLAAAHWALQSLADGVVDESNARTRFLLIGVPGPPPPRTGTDRTSAVLRIANVPGALLDALTEFGMRGIDLTRIESRPTRTGLGTYMFFIDCVGHIADDAVAEALKALHRRCADVRYLGSWPTGQTYAAQPPPADEAAIWLQQLREGKPEASPEPPL</sequence>
<reference key="1">
    <citation type="journal article" date="2007" name="Genome Res.">
        <title>Reductive evolution and niche adaptation inferred from the genome of Mycobacterium ulcerans, the causative agent of Buruli ulcer.</title>
        <authorList>
            <person name="Stinear T.P."/>
            <person name="Seemann T."/>
            <person name="Pidot S."/>
            <person name="Frigui W."/>
            <person name="Reysset G."/>
            <person name="Garnier T."/>
            <person name="Meurice G."/>
            <person name="Simon D."/>
            <person name="Bouchier C."/>
            <person name="Ma L."/>
            <person name="Tichit M."/>
            <person name="Porter J.L."/>
            <person name="Ryan J."/>
            <person name="Johnson P.D.R."/>
            <person name="Davies J.K."/>
            <person name="Jenkin G.A."/>
            <person name="Small P.L.C."/>
            <person name="Jones L.M."/>
            <person name="Tekaia F."/>
            <person name="Laval F."/>
            <person name="Daffe M."/>
            <person name="Parkhill J."/>
            <person name="Cole S.T."/>
        </authorList>
    </citation>
    <scope>NUCLEOTIDE SEQUENCE [LARGE SCALE GENOMIC DNA]</scope>
    <source>
        <strain>Agy99</strain>
    </source>
</reference>
<evidence type="ECO:0000250" key="1"/>
<evidence type="ECO:0000255" key="2">
    <source>
        <dbReference type="PROSITE-ProRule" id="PRU00517"/>
    </source>
</evidence>
<evidence type="ECO:0000255" key="3">
    <source>
        <dbReference type="PROSITE-ProRule" id="PRU01007"/>
    </source>
</evidence>
<organism>
    <name type="scientific">Mycobacterium ulcerans (strain Agy99)</name>
    <dbReference type="NCBI Taxonomy" id="362242"/>
    <lineage>
        <taxon>Bacteria</taxon>
        <taxon>Bacillati</taxon>
        <taxon>Actinomycetota</taxon>
        <taxon>Actinomycetes</taxon>
        <taxon>Mycobacteriales</taxon>
        <taxon>Mycobacteriaceae</taxon>
        <taxon>Mycobacterium</taxon>
        <taxon>Mycobacterium ulcerans group</taxon>
    </lineage>
</organism>
<accession>A0PX17</accession>
<feature type="chain" id="PRO_0000382044" description="Prephenate dehydratase">
    <location>
        <begin position="1"/>
        <end position="315"/>
    </location>
</feature>
<feature type="domain" description="Prephenate dehydratase" evidence="2">
    <location>
        <begin position="3"/>
        <end position="189"/>
    </location>
</feature>
<feature type="domain" description="ACT" evidence="3">
    <location>
        <begin position="203"/>
        <end position="280"/>
    </location>
</feature>
<feature type="site" description="Essential for activity" evidence="1">
    <location>
        <position position="182"/>
    </location>
</feature>
<name>PHEA_MYCUA</name>
<keyword id="KW-0028">Amino-acid biosynthesis</keyword>
<keyword id="KW-0057">Aromatic amino acid biosynthesis</keyword>
<keyword id="KW-0456">Lyase</keyword>
<keyword id="KW-0584">Phenylalanine biosynthesis</keyword>